<evidence type="ECO:0000255" key="1"/>
<evidence type="ECO:0000255" key="2">
    <source>
        <dbReference type="PROSITE-ProRule" id="PRU01117"/>
    </source>
</evidence>
<evidence type="ECO:0000256" key="3">
    <source>
        <dbReference type="SAM" id="MobiDB-lite"/>
    </source>
</evidence>
<evidence type="ECO:0000269" key="4">
    <source>
    </source>
</evidence>
<evidence type="ECO:0000305" key="5"/>
<proteinExistence type="inferred from homology"/>
<keyword id="KW-0961">Cell wall biogenesis/degradation</keyword>
<keyword id="KW-0178">Competence</keyword>
<keyword id="KW-0378">Hydrolase</keyword>
<keyword id="KW-1185">Reference proteome</keyword>
<keyword id="KW-0964">Secreted</keyword>
<keyword id="KW-0749">Sporulation</keyword>
<protein>
    <recommendedName>
        <fullName>N-acetylmuramoyl-L-alanine amidase BlyA</fullName>
        <ecNumber>3.5.1.28</ecNumber>
    </recommendedName>
    <alternativeName>
        <fullName>Autolysin</fullName>
    </alternativeName>
    <alternativeName>
        <fullName>Cell wall hydrolase</fullName>
    </alternativeName>
</protein>
<dbReference type="EC" id="3.5.1.28"/>
<dbReference type="EMBL" id="AF021803">
    <property type="protein sequence ID" value="AAC38300.1"/>
    <property type="molecule type" value="Genomic_DNA"/>
</dbReference>
<dbReference type="EMBL" id="AL009126">
    <property type="protein sequence ID" value="CAB14059.1"/>
    <property type="molecule type" value="Genomic_DNA"/>
</dbReference>
<dbReference type="RefSeq" id="NP_390024.1">
    <property type="nucleotide sequence ID" value="NC_000964.3"/>
</dbReference>
<dbReference type="RefSeq" id="WP_004399108.1">
    <property type="nucleotide sequence ID" value="NZ_OZ025638.1"/>
</dbReference>
<dbReference type="SMR" id="O31982"/>
<dbReference type="FunCoup" id="O31982">
    <property type="interactions" value="116"/>
</dbReference>
<dbReference type="STRING" id="224308.BSU21410"/>
<dbReference type="PaxDb" id="224308-BSU21410"/>
<dbReference type="EnsemblBacteria" id="CAB14059">
    <property type="protein sequence ID" value="CAB14059"/>
    <property type="gene ID" value="BSU_21410"/>
</dbReference>
<dbReference type="GeneID" id="939130"/>
<dbReference type="KEGG" id="bsu:BSU21410"/>
<dbReference type="PATRIC" id="fig|224308.179.peg.2338"/>
<dbReference type="eggNOG" id="COG5632">
    <property type="taxonomic scope" value="Bacteria"/>
</dbReference>
<dbReference type="InParanoid" id="O31982"/>
<dbReference type="OrthoDB" id="9794294at2"/>
<dbReference type="BioCyc" id="BSUB:BSU21410-MONOMER"/>
<dbReference type="Proteomes" id="UP000001570">
    <property type="component" value="Chromosome"/>
</dbReference>
<dbReference type="GO" id="GO:0005576">
    <property type="term" value="C:extracellular region"/>
    <property type="evidence" value="ECO:0007669"/>
    <property type="project" value="UniProtKB-SubCell"/>
</dbReference>
<dbReference type="GO" id="GO:0008745">
    <property type="term" value="F:N-acetylmuramoyl-L-alanine amidase activity"/>
    <property type="evidence" value="ECO:0000318"/>
    <property type="project" value="GO_Central"/>
</dbReference>
<dbReference type="GO" id="GO:0071555">
    <property type="term" value="P:cell wall organization"/>
    <property type="evidence" value="ECO:0007669"/>
    <property type="project" value="UniProtKB-KW"/>
</dbReference>
<dbReference type="GO" id="GO:0030420">
    <property type="term" value="P:establishment of competence for transformation"/>
    <property type="evidence" value="ECO:0007669"/>
    <property type="project" value="UniProtKB-KW"/>
</dbReference>
<dbReference type="GO" id="GO:0009253">
    <property type="term" value="P:peptidoglycan catabolic process"/>
    <property type="evidence" value="ECO:0000318"/>
    <property type="project" value="GO_Central"/>
</dbReference>
<dbReference type="GO" id="GO:0009254">
    <property type="term" value="P:peptidoglycan turnover"/>
    <property type="evidence" value="ECO:0000318"/>
    <property type="project" value="GO_Central"/>
</dbReference>
<dbReference type="GO" id="GO:0030435">
    <property type="term" value="P:sporulation resulting in formation of a cellular spore"/>
    <property type="evidence" value="ECO:0007669"/>
    <property type="project" value="UniProtKB-KW"/>
</dbReference>
<dbReference type="CDD" id="cd06583">
    <property type="entry name" value="PGRP"/>
    <property type="match status" value="1"/>
</dbReference>
<dbReference type="Gene3D" id="3.40.80.10">
    <property type="entry name" value="Peptidoglycan recognition protein-like"/>
    <property type="match status" value="1"/>
</dbReference>
<dbReference type="InterPro" id="IPR036505">
    <property type="entry name" value="Amidase/PGRP_sf"/>
</dbReference>
<dbReference type="InterPro" id="IPR002502">
    <property type="entry name" value="Amidase_domain"/>
</dbReference>
<dbReference type="InterPro" id="IPR051206">
    <property type="entry name" value="NAMLAA_amidase_2"/>
</dbReference>
<dbReference type="InterPro" id="IPR003646">
    <property type="entry name" value="SH3-like_bac-type"/>
</dbReference>
<dbReference type="PANTHER" id="PTHR30417">
    <property type="entry name" value="N-ACETYLMURAMOYL-L-ALANINE AMIDASE AMID"/>
    <property type="match status" value="1"/>
</dbReference>
<dbReference type="PANTHER" id="PTHR30417:SF1">
    <property type="entry name" value="N-ACETYLMURAMOYL-L-ALANINE AMIDASE AMID"/>
    <property type="match status" value="1"/>
</dbReference>
<dbReference type="Pfam" id="PF01510">
    <property type="entry name" value="Amidase_2"/>
    <property type="match status" value="1"/>
</dbReference>
<dbReference type="SMART" id="SM00644">
    <property type="entry name" value="Ami_2"/>
    <property type="match status" value="1"/>
</dbReference>
<dbReference type="SUPFAM" id="SSF55846">
    <property type="entry name" value="N-acetylmuramoyl-L-alanine amidase-like"/>
    <property type="match status" value="1"/>
</dbReference>
<dbReference type="PROSITE" id="PS51781">
    <property type="entry name" value="SH3B"/>
    <property type="match status" value="2"/>
</dbReference>
<sequence length="367" mass="39629">MSVFTNSYIPVNKYTRPGLKLQGVKKCVLHYTANPGAGADNHRRYFSNAQVYASAHIFVDKAEAICIIPLNEVAYHANDIQQRDSAGNPYRGVAALKPNANFLSIGVEMCLEKDGSFHSDTVERTEDVFVELCNKFGLDPIDDIVRHYDITHKNCPAPWVSNSQKFVDFKNRVKAKMSGKSVSKASPTKPTTSSPSSSSAVSGSLKSKVDGLRFYSKPSWEDKDVVGTVNKGIGFPTVVEKVKVGSAYQYKVKNSKGTTYYITASDKYVDVTGSVKTSSSAPKTTSTSSSSSSIKSVGKIKIVGVSSAAIVMDKPDRNSSKNIGTVKLGSTISISGSVKGKNNSNGYWEVIYKGKRGYISGQFGSTI</sequence>
<accession>O31982</accession>
<name>BLYA_BACSU</name>
<feature type="chain" id="PRO_0000164416" description="N-acetylmuramoyl-L-alanine amidase BlyA">
    <location>
        <begin position="1"/>
        <end position="367"/>
    </location>
</feature>
<feature type="domain" description="N-acetylmuramoyl-L-alanine amidase" evidence="1">
    <location>
        <begin position="24"/>
        <end position="158"/>
    </location>
</feature>
<feature type="domain" description="SH3b 1" evidence="2">
    <location>
        <begin position="202"/>
        <end position="271"/>
    </location>
</feature>
<feature type="domain" description="SH3b 2" evidence="2">
    <location>
        <begin position="298"/>
        <end position="367"/>
    </location>
</feature>
<feature type="region of interest" description="Disordered" evidence="3">
    <location>
        <begin position="178"/>
        <end position="204"/>
    </location>
</feature>
<feature type="compositionally biased region" description="Low complexity" evidence="3">
    <location>
        <begin position="180"/>
        <end position="204"/>
    </location>
</feature>
<reference key="1">
    <citation type="journal article" date="1998" name="Microbiology">
        <title>The N-acetylmuramoyl-L-alanine amidase encoded by the Bacillus subtilis 168 prophage SP beta.</title>
        <authorList>
            <person name="Regamey A."/>
            <person name="Karamata D."/>
        </authorList>
    </citation>
    <scope>NUCLEOTIDE SEQUENCE [GENOMIC DNA]</scope>
    <scope>FUNCTION</scope>
    <source>
        <strain>168</strain>
    </source>
</reference>
<reference key="2">
    <citation type="journal article" date="1997" name="Nature">
        <title>The complete genome sequence of the Gram-positive bacterium Bacillus subtilis.</title>
        <authorList>
            <person name="Kunst F."/>
            <person name="Ogasawara N."/>
            <person name="Moszer I."/>
            <person name="Albertini A.M."/>
            <person name="Alloni G."/>
            <person name="Azevedo V."/>
            <person name="Bertero M.G."/>
            <person name="Bessieres P."/>
            <person name="Bolotin A."/>
            <person name="Borchert S."/>
            <person name="Borriss R."/>
            <person name="Boursier L."/>
            <person name="Brans A."/>
            <person name="Braun M."/>
            <person name="Brignell S.C."/>
            <person name="Bron S."/>
            <person name="Brouillet S."/>
            <person name="Bruschi C.V."/>
            <person name="Caldwell B."/>
            <person name="Capuano V."/>
            <person name="Carter N.M."/>
            <person name="Choi S.-K."/>
            <person name="Codani J.-J."/>
            <person name="Connerton I.F."/>
            <person name="Cummings N.J."/>
            <person name="Daniel R.A."/>
            <person name="Denizot F."/>
            <person name="Devine K.M."/>
            <person name="Duesterhoeft A."/>
            <person name="Ehrlich S.D."/>
            <person name="Emmerson P.T."/>
            <person name="Entian K.-D."/>
            <person name="Errington J."/>
            <person name="Fabret C."/>
            <person name="Ferrari E."/>
            <person name="Foulger D."/>
            <person name="Fritz C."/>
            <person name="Fujita M."/>
            <person name="Fujita Y."/>
            <person name="Fuma S."/>
            <person name="Galizzi A."/>
            <person name="Galleron N."/>
            <person name="Ghim S.-Y."/>
            <person name="Glaser P."/>
            <person name="Goffeau A."/>
            <person name="Golightly E.J."/>
            <person name="Grandi G."/>
            <person name="Guiseppi G."/>
            <person name="Guy B.J."/>
            <person name="Haga K."/>
            <person name="Haiech J."/>
            <person name="Harwood C.R."/>
            <person name="Henaut A."/>
            <person name="Hilbert H."/>
            <person name="Holsappel S."/>
            <person name="Hosono S."/>
            <person name="Hullo M.-F."/>
            <person name="Itaya M."/>
            <person name="Jones L.-M."/>
            <person name="Joris B."/>
            <person name="Karamata D."/>
            <person name="Kasahara Y."/>
            <person name="Klaerr-Blanchard M."/>
            <person name="Klein C."/>
            <person name="Kobayashi Y."/>
            <person name="Koetter P."/>
            <person name="Koningstein G."/>
            <person name="Krogh S."/>
            <person name="Kumano M."/>
            <person name="Kurita K."/>
            <person name="Lapidus A."/>
            <person name="Lardinois S."/>
            <person name="Lauber J."/>
            <person name="Lazarevic V."/>
            <person name="Lee S.-M."/>
            <person name="Levine A."/>
            <person name="Liu H."/>
            <person name="Masuda S."/>
            <person name="Mauel C."/>
            <person name="Medigue C."/>
            <person name="Medina N."/>
            <person name="Mellado R.P."/>
            <person name="Mizuno M."/>
            <person name="Moestl D."/>
            <person name="Nakai S."/>
            <person name="Noback M."/>
            <person name="Noone D."/>
            <person name="O'Reilly M."/>
            <person name="Ogawa K."/>
            <person name="Ogiwara A."/>
            <person name="Oudega B."/>
            <person name="Park S.-H."/>
            <person name="Parro V."/>
            <person name="Pohl T.M."/>
            <person name="Portetelle D."/>
            <person name="Porwollik S."/>
            <person name="Prescott A.M."/>
            <person name="Presecan E."/>
            <person name="Pujic P."/>
            <person name="Purnelle B."/>
            <person name="Rapoport G."/>
            <person name="Rey M."/>
            <person name="Reynolds S."/>
            <person name="Rieger M."/>
            <person name="Rivolta C."/>
            <person name="Rocha E."/>
            <person name="Roche B."/>
            <person name="Rose M."/>
            <person name="Sadaie Y."/>
            <person name="Sato T."/>
            <person name="Scanlan E."/>
            <person name="Schleich S."/>
            <person name="Schroeter R."/>
            <person name="Scoffone F."/>
            <person name="Sekiguchi J."/>
            <person name="Sekowska A."/>
            <person name="Seror S.J."/>
            <person name="Serror P."/>
            <person name="Shin B.-S."/>
            <person name="Soldo B."/>
            <person name="Sorokin A."/>
            <person name="Tacconi E."/>
            <person name="Takagi T."/>
            <person name="Takahashi H."/>
            <person name="Takemaru K."/>
            <person name="Takeuchi M."/>
            <person name="Tamakoshi A."/>
            <person name="Tanaka T."/>
            <person name="Terpstra P."/>
            <person name="Tognoni A."/>
            <person name="Tosato V."/>
            <person name="Uchiyama S."/>
            <person name="Vandenbol M."/>
            <person name="Vannier F."/>
            <person name="Vassarotti A."/>
            <person name="Viari A."/>
            <person name="Wambutt R."/>
            <person name="Wedler E."/>
            <person name="Wedler H."/>
            <person name="Weitzenegger T."/>
            <person name="Winters P."/>
            <person name="Wipat A."/>
            <person name="Yamamoto H."/>
            <person name="Yamane K."/>
            <person name="Yasumoto K."/>
            <person name="Yata K."/>
            <person name="Yoshida K."/>
            <person name="Yoshikawa H.-F."/>
            <person name="Zumstein E."/>
            <person name="Yoshikawa H."/>
            <person name="Danchin A."/>
        </authorList>
    </citation>
    <scope>NUCLEOTIDE SEQUENCE [LARGE SCALE GENOMIC DNA]</scope>
    <source>
        <strain>168</strain>
    </source>
</reference>
<organism>
    <name type="scientific">Bacillus subtilis (strain 168)</name>
    <dbReference type="NCBI Taxonomy" id="224308"/>
    <lineage>
        <taxon>Bacteria</taxon>
        <taxon>Bacillati</taxon>
        <taxon>Bacillota</taxon>
        <taxon>Bacilli</taxon>
        <taxon>Bacillales</taxon>
        <taxon>Bacillaceae</taxon>
        <taxon>Bacillus</taxon>
    </lineage>
</organism>
<gene>
    <name type="primary">blyA</name>
    <name type="synonym">yomC</name>
    <name type="ordered locus">BSU21410</name>
</gene>
<comment type="function">
    <text evidence="4">Autolysins are involved in some important biological processes such as cell separation, cell-wall turnover, competence for genetic transformation, formation of the flagella and sporulation. Involved in prophage SP-beta-mediated cell lysis.</text>
</comment>
<comment type="catalytic activity">
    <reaction>
        <text>Hydrolyzes the link between N-acetylmuramoyl residues and L-amino acid residues in certain cell-wall glycopeptides.</text>
        <dbReference type="EC" id="3.5.1.28"/>
    </reaction>
</comment>
<comment type="subcellular location">
    <subcellularLocation>
        <location evidence="5">Secreted</location>
    </subcellularLocation>
</comment>
<comment type="similarity">
    <text evidence="5">Belongs to the N-acetylmuramoyl-L-alanine amidase 2 family.</text>
</comment>